<protein>
    <recommendedName>
        <fullName evidence="1">Adenylyl-sulfate kinase</fullName>
        <ecNumber evidence="1">2.7.1.25</ecNumber>
    </recommendedName>
    <alternativeName>
        <fullName evidence="1">APS kinase</fullName>
    </alternativeName>
    <alternativeName>
        <fullName evidence="1">ATP adenosine-5'-phosphosulfate 3'-phosphotransferase</fullName>
    </alternativeName>
    <alternativeName>
        <fullName evidence="1">Adenosine-5'-phosphosulfate kinase</fullName>
    </alternativeName>
</protein>
<sequence length="199" mass="22347">MSNIVWHDHKVTRAERSANKNQKPCLLWFTGLSGSGKSTIANALDVALHERGYHTFLLDGDNVRHGLCSDLGFSDDDRVENIRRVGEVCKLFADAGLIVMSAFISPFTSDRRMVRKLFPAGEFIEVFMDAPLETCESRDPKGLYKKARAGEIKHFTGIDSPYEVPSHPEIRLDTSQSTVDECVDSLIAYLQERELIKSN</sequence>
<dbReference type="EC" id="2.7.1.25" evidence="1"/>
<dbReference type="EMBL" id="CP000514">
    <property type="protein sequence ID" value="ABM19697.1"/>
    <property type="molecule type" value="Genomic_DNA"/>
</dbReference>
<dbReference type="SMR" id="A1U3X8"/>
<dbReference type="STRING" id="351348.Maqu_2622"/>
<dbReference type="KEGG" id="maq:Maqu_2622"/>
<dbReference type="eggNOG" id="COG0529">
    <property type="taxonomic scope" value="Bacteria"/>
</dbReference>
<dbReference type="HOGENOM" id="CLU_046932_1_0_6"/>
<dbReference type="OrthoDB" id="9804504at2"/>
<dbReference type="UniPathway" id="UPA00140">
    <property type="reaction ID" value="UER00205"/>
</dbReference>
<dbReference type="Proteomes" id="UP000000998">
    <property type="component" value="Chromosome"/>
</dbReference>
<dbReference type="GO" id="GO:0004020">
    <property type="term" value="F:adenylylsulfate kinase activity"/>
    <property type="evidence" value="ECO:0007669"/>
    <property type="project" value="UniProtKB-UniRule"/>
</dbReference>
<dbReference type="GO" id="GO:0005524">
    <property type="term" value="F:ATP binding"/>
    <property type="evidence" value="ECO:0007669"/>
    <property type="project" value="UniProtKB-UniRule"/>
</dbReference>
<dbReference type="GO" id="GO:0070814">
    <property type="term" value="P:hydrogen sulfide biosynthetic process"/>
    <property type="evidence" value="ECO:0007669"/>
    <property type="project" value="UniProtKB-UniRule"/>
</dbReference>
<dbReference type="GO" id="GO:0000103">
    <property type="term" value="P:sulfate assimilation"/>
    <property type="evidence" value="ECO:0007669"/>
    <property type="project" value="UniProtKB-UniRule"/>
</dbReference>
<dbReference type="CDD" id="cd02027">
    <property type="entry name" value="APSK"/>
    <property type="match status" value="1"/>
</dbReference>
<dbReference type="FunFam" id="3.40.50.300:FF:000212">
    <property type="entry name" value="Adenylyl-sulfate kinase"/>
    <property type="match status" value="1"/>
</dbReference>
<dbReference type="Gene3D" id="3.40.50.300">
    <property type="entry name" value="P-loop containing nucleotide triphosphate hydrolases"/>
    <property type="match status" value="1"/>
</dbReference>
<dbReference type="HAMAP" id="MF_00065">
    <property type="entry name" value="Adenylyl_sulf_kinase"/>
    <property type="match status" value="1"/>
</dbReference>
<dbReference type="InterPro" id="IPR002891">
    <property type="entry name" value="APS_kinase"/>
</dbReference>
<dbReference type="InterPro" id="IPR027417">
    <property type="entry name" value="P-loop_NTPase"/>
</dbReference>
<dbReference type="NCBIfam" id="TIGR00455">
    <property type="entry name" value="apsK"/>
    <property type="match status" value="1"/>
</dbReference>
<dbReference type="NCBIfam" id="NF003013">
    <property type="entry name" value="PRK03846.1"/>
    <property type="match status" value="1"/>
</dbReference>
<dbReference type="PANTHER" id="PTHR11055:SF63">
    <property type="entry name" value="ADENYLYL-SULFATE KINASE 1, CHLOROPLASTIC"/>
    <property type="match status" value="1"/>
</dbReference>
<dbReference type="PANTHER" id="PTHR11055">
    <property type="entry name" value="BIFUNCTIONAL 3'-PHOSPHOADENOSINE 5'-PHOSPHOSULFATE SYNTHASE"/>
    <property type="match status" value="1"/>
</dbReference>
<dbReference type="Pfam" id="PF01583">
    <property type="entry name" value="APS_kinase"/>
    <property type="match status" value="1"/>
</dbReference>
<dbReference type="SUPFAM" id="SSF52540">
    <property type="entry name" value="P-loop containing nucleoside triphosphate hydrolases"/>
    <property type="match status" value="1"/>
</dbReference>
<name>CYSC_MARN8</name>
<keyword id="KW-0067">ATP-binding</keyword>
<keyword id="KW-0418">Kinase</keyword>
<keyword id="KW-0547">Nucleotide-binding</keyword>
<keyword id="KW-0597">Phosphoprotein</keyword>
<keyword id="KW-0808">Transferase</keyword>
<gene>
    <name evidence="1" type="primary">cysC</name>
    <name type="ordered locus">Maqu_2622</name>
</gene>
<reference key="1">
    <citation type="journal article" date="2011" name="Appl. Environ. Microbiol.">
        <title>Genomic potential of Marinobacter aquaeolei, a biogeochemical 'opportunitroph'.</title>
        <authorList>
            <person name="Singer E."/>
            <person name="Webb E.A."/>
            <person name="Nelson W.C."/>
            <person name="Heidelberg J.F."/>
            <person name="Ivanova N."/>
            <person name="Pati A."/>
            <person name="Edwards K.J."/>
        </authorList>
    </citation>
    <scope>NUCLEOTIDE SEQUENCE [LARGE SCALE GENOMIC DNA]</scope>
    <source>
        <strain>ATCC 700491 / DSM 11845 / VT8</strain>
    </source>
</reference>
<comment type="function">
    <text evidence="1">Catalyzes the synthesis of activated sulfate.</text>
</comment>
<comment type="catalytic activity">
    <reaction evidence="1">
        <text>adenosine 5'-phosphosulfate + ATP = 3'-phosphoadenylyl sulfate + ADP + H(+)</text>
        <dbReference type="Rhea" id="RHEA:24152"/>
        <dbReference type="ChEBI" id="CHEBI:15378"/>
        <dbReference type="ChEBI" id="CHEBI:30616"/>
        <dbReference type="ChEBI" id="CHEBI:58243"/>
        <dbReference type="ChEBI" id="CHEBI:58339"/>
        <dbReference type="ChEBI" id="CHEBI:456216"/>
        <dbReference type="EC" id="2.7.1.25"/>
    </reaction>
</comment>
<comment type="pathway">
    <text evidence="1">Sulfur metabolism; hydrogen sulfide biosynthesis; sulfite from sulfate: step 2/3.</text>
</comment>
<comment type="similarity">
    <text evidence="1">Belongs to the APS kinase family.</text>
</comment>
<evidence type="ECO:0000255" key="1">
    <source>
        <dbReference type="HAMAP-Rule" id="MF_00065"/>
    </source>
</evidence>
<feature type="chain" id="PRO_1000009015" description="Adenylyl-sulfate kinase">
    <location>
        <begin position="1"/>
        <end position="199"/>
    </location>
</feature>
<feature type="active site" description="Phosphoserine intermediate" evidence="1">
    <location>
        <position position="105"/>
    </location>
</feature>
<feature type="binding site" evidence="1">
    <location>
        <begin position="31"/>
        <end position="38"/>
    </location>
    <ligand>
        <name>ATP</name>
        <dbReference type="ChEBI" id="CHEBI:30616"/>
    </ligand>
</feature>
<accession>A1U3X8</accession>
<proteinExistence type="inferred from homology"/>
<organism>
    <name type="scientific">Marinobacter nauticus (strain ATCC 700491 / DSM 11845 / VT8)</name>
    <name type="common">Marinobacter aquaeolei</name>
    <dbReference type="NCBI Taxonomy" id="351348"/>
    <lineage>
        <taxon>Bacteria</taxon>
        <taxon>Pseudomonadati</taxon>
        <taxon>Pseudomonadota</taxon>
        <taxon>Gammaproteobacteria</taxon>
        <taxon>Pseudomonadales</taxon>
        <taxon>Marinobacteraceae</taxon>
        <taxon>Marinobacter</taxon>
    </lineage>
</organism>